<feature type="chain" id="PRO_1000206444" description="Malate dehydrogenase">
    <location>
        <begin position="1"/>
        <end position="312"/>
    </location>
</feature>
<feature type="active site" description="Proton acceptor" evidence="1">
    <location>
        <position position="180"/>
    </location>
</feature>
<feature type="binding site" evidence="1">
    <location>
        <begin position="12"/>
        <end position="17"/>
    </location>
    <ligand>
        <name>NAD(+)</name>
        <dbReference type="ChEBI" id="CHEBI:57540"/>
    </ligand>
</feature>
<feature type="binding site" evidence="1">
    <location>
        <position position="36"/>
    </location>
    <ligand>
        <name>NAD(+)</name>
        <dbReference type="ChEBI" id="CHEBI:57540"/>
    </ligand>
</feature>
<feature type="binding site" evidence="1">
    <location>
        <position position="87"/>
    </location>
    <ligand>
        <name>substrate</name>
    </ligand>
</feature>
<feature type="binding site" evidence="1">
    <location>
        <position position="93"/>
    </location>
    <ligand>
        <name>substrate</name>
    </ligand>
</feature>
<feature type="binding site" evidence="1">
    <location>
        <position position="100"/>
    </location>
    <ligand>
        <name>NAD(+)</name>
        <dbReference type="ChEBI" id="CHEBI:57540"/>
    </ligand>
</feature>
<feature type="binding site" evidence="1">
    <location>
        <begin position="123"/>
        <end position="125"/>
    </location>
    <ligand>
        <name>NAD(+)</name>
        <dbReference type="ChEBI" id="CHEBI:57540"/>
    </ligand>
</feature>
<feature type="binding site" evidence="1">
    <location>
        <position position="125"/>
    </location>
    <ligand>
        <name>substrate</name>
    </ligand>
</feature>
<feature type="binding site" evidence="1">
    <location>
        <position position="156"/>
    </location>
    <ligand>
        <name>substrate</name>
    </ligand>
</feature>
<feature type="modified residue" description="Phosphoserine" evidence="1">
    <location>
        <position position="149"/>
    </location>
</feature>
<gene>
    <name evidence="1" type="primary">mdh</name>
    <name type="ordered locus">GWCH70_2677</name>
</gene>
<keyword id="KW-0520">NAD</keyword>
<keyword id="KW-0560">Oxidoreductase</keyword>
<keyword id="KW-0597">Phosphoprotein</keyword>
<keyword id="KW-0816">Tricarboxylic acid cycle</keyword>
<dbReference type="EC" id="1.1.1.37" evidence="1"/>
<dbReference type="EMBL" id="CP001638">
    <property type="protein sequence ID" value="ACS25370.1"/>
    <property type="molecule type" value="Genomic_DNA"/>
</dbReference>
<dbReference type="SMR" id="C5D654"/>
<dbReference type="STRING" id="471223.GWCH70_2677"/>
<dbReference type="KEGG" id="gwc:GWCH70_2677"/>
<dbReference type="eggNOG" id="COG0039">
    <property type="taxonomic scope" value="Bacteria"/>
</dbReference>
<dbReference type="HOGENOM" id="CLU_045401_2_1_9"/>
<dbReference type="OrthoDB" id="9802969at2"/>
<dbReference type="GO" id="GO:0004459">
    <property type="term" value="F:L-lactate dehydrogenase activity"/>
    <property type="evidence" value="ECO:0007669"/>
    <property type="project" value="TreeGrafter"/>
</dbReference>
<dbReference type="GO" id="GO:0030060">
    <property type="term" value="F:L-malate dehydrogenase (NAD+) activity"/>
    <property type="evidence" value="ECO:0007669"/>
    <property type="project" value="UniProtKB-UniRule"/>
</dbReference>
<dbReference type="GO" id="GO:0006089">
    <property type="term" value="P:lactate metabolic process"/>
    <property type="evidence" value="ECO:0007669"/>
    <property type="project" value="TreeGrafter"/>
</dbReference>
<dbReference type="GO" id="GO:0006099">
    <property type="term" value="P:tricarboxylic acid cycle"/>
    <property type="evidence" value="ECO:0007669"/>
    <property type="project" value="UniProtKB-UniRule"/>
</dbReference>
<dbReference type="CDD" id="cd01339">
    <property type="entry name" value="LDH-like_MDH"/>
    <property type="match status" value="1"/>
</dbReference>
<dbReference type="FunFam" id="3.40.50.720:FF:000018">
    <property type="entry name" value="Malate dehydrogenase"/>
    <property type="match status" value="1"/>
</dbReference>
<dbReference type="FunFam" id="3.90.110.10:FF:000004">
    <property type="entry name" value="Malate dehydrogenase"/>
    <property type="match status" value="1"/>
</dbReference>
<dbReference type="Gene3D" id="3.90.110.10">
    <property type="entry name" value="Lactate dehydrogenase/glycoside hydrolase, family 4, C-terminal"/>
    <property type="match status" value="1"/>
</dbReference>
<dbReference type="Gene3D" id="3.40.50.720">
    <property type="entry name" value="NAD(P)-binding Rossmann-like Domain"/>
    <property type="match status" value="1"/>
</dbReference>
<dbReference type="HAMAP" id="MF_00487">
    <property type="entry name" value="Malate_dehydrog_3"/>
    <property type="match status" value="1"/>
</dbReference>
<dbReference type="InterPro" id="IPR001557">
    <property type="entry name" value="L-lactate/malate_DH"/>
</dbReference>
<dbReference type="InterPro" id="IPR022383">
    <property type="entry name" value="Lactate/malate_DH_C"/>
</dbReference>
<dbReference type="InterPro" id="IPR001236">
    <property type="entry name" value="Lactate/malate_DH_N"/>
</dbReference>
<dbReference type="InterPro" id="IPR015955">
    <property type="entry name" value="Lactate_DH/Glyco_Ohase_4_C"/>
</dbReference>
<dbReference type="InterPro" id="IPR011275">
    <property type="entry name" value="Malate_DH_type3"/>
</dbReference>
<dbReference type="InterPro" id="IPR036291">
    <property type="entry name" value="NAD(P)-bd_dom_sf"/>
</dbReference>
<dbReference type="NCBIfam" id="TIGR01763">
    <property type="entry name" value="MalateDH_bact"/>
    <property type="match status" value="1"/>
</dbReference>
<dbReference type="NCBIfam" id="NF004863">
    <property type="entry name" value="PRK06223.1"/>
    <property type="match status" value="1"/>
</dbReference>
<dbReference type="PANTHER" id="PTHR43128">
    <property type="entry name" value="L-2-HYDROXYCARBOXYLATE DEHYDROGENASE (NAD(P)(+))"/>
    <property type="match status" value="1"/>
</dbReference>
<dbReference type="PANTHER" id="PTHR43128:SF16">
    <property type="entry name" value="L-LACTATE DEHYDROGENASE"/>
    <property type="match status" value="1"/>
</dbReference>
<dbReference type="Pfam" id="PF02866">
    <property type="entry name" value="Ldh_1_C"/>
    <property type="match status" value="1"/>
</dbReference>
<dbReference type="Pfam" id="PF00056">
    <property type="entry name" value="Ldh_1_N"/>
    <property type="match status" value="1"/>
</dbReference>
<dbReference type="PIRSF" id="PIRSF000102">
    <property type="entry name" value="Lac_mal_DH"/>
    <property type="match status" value="1"/>
</dbReference>
<dbReference type="PRINTS" id="PR00086">
    <property type="entry name" value="LLDHDRGNASE"/>
</dbReference>
<dbReference type="SUPFAM" id="SSF56327">
    <property type="entry name" value="LDH C-terminal domain-like"/>
    <property type="match status" value="1"/>
</dbReference>
<dbReference type="SUPFAM" id="SSF51735">
    <property type="entry name" value="NAD(P)-binding Rossmann-fold domains"/>
    <property type="match status" value="1"/>
</dbReference>
<proteinExistence type="inferred from homology"/>
<sequence>MTMKRKKISVIGAGFTGATTAFILAQKELGDVVLVDIPQLENPTKGKALDMLESSPVLGFDANIIGTSDYADTADSDIVVITAGIARKPGMSRDDLVTTNQKIMKQVTKEVVKYSPNCYIIVLTNPVDAMTYTVFKESGFPKNRVIGQSGVLDTARFRTFVAQELNISVKDVTGFVLGGHGDDMVPLVRYSYAGGIPLEKLIPKDRLDAIVERTRKGGGEIVNLLGNGSAYYAPAASLAEMVEAIIKDQRRILPAIAYLEGEYGYEGIYLGVPTILGGNGIEKVIELELTEEEKAALAKSVESVKNVMRVLE</sequence>
<organism>
    <name type="scientific">Geobacillus sp. (strain WCH70)</name>
    <dbReference type="NCBI Taxonomy" id="471223"/>
    <lineage>
        <taxon>Bacteria</taxon>
        <taxon>Bacillati</taxon>
        <taxon>Bacillota</taxon>
        <taxon>Bacilli</taxon>
        <taxon>Bacillales</taxon>
        <taxon>Anoxybacillaceae</taxon>
        <taxon>Geobacillus</taxon>
    </lineage>
</organism>
<accession>C5D654</accession>
<name>MDH_GEOSW</name>
<comment type="function">
    <text evidence="1">Catalyzes the reversible oxidation of malate to oxaloacetate.</text>
</comment>
<comment type="catalytic activity">
    <reaction evidence="1">
        <text>(S)-malate + NAD(+) = oxaloacetate + NADH + H(+)</text>
        <dbReference type="Rhea" id="RHEA:21432"/>
        <dbReference type="ChEBI" id="CHEBI:15378"/>
        <dbReference type="ChEBI" id="CHEBI:15589"/>
        <dbReference type="ChEBI" id="CHEBI:16452"/>
        <dbReference type="ChEBI" id="CHEBI:57540"/>
        <dbReference type="ChEBI" id="CHEBI:57945"/>
        <dbReference type="EC" id="1.1.1.37"/>
    </reaction>
</comment>
<comment type="similarity">
    <text evidence="1">Belongs to the LDH/MDH superfamily. MDH type 3 family.</text>
</comment>
<reference key="1">
    <citation type="submission" date="2009-06" db="EMBL/GenBank/DDBJ databases">
        <title>Complete sequence of chromosome of Geopacillus sp. WCH70.</title>
        <authorList>
            <consortium name="US DOE Joint Genome Institute"/>
            <person name="Lucas S."/>
            <person name="Copeland A."/>
            <person name="Lapidus A."/>
            <person name="Glavina del Rio T."/>
            <person name="Dalin E."/>
            <person name="Tice H."/>
            <person name="Bruce D."/>
            <person name="Goodwin L."/>
            <person name="Pitluck S."/>
            <person name="Chertkov O."/>
            <person name="Brettin T."/>
            <person name="Detter J.C."/>
            <person name="Han C."/>
            <person name="Larimer F."/>
            <person name="Land M."/>
            <person name="Hauser L."/>
            <person name="Kyrpides N."/>
            <person name="Mikhailova N."/>
            <person name="Brumm P."/>
            <person name="Mead D.A."/>
            <person name="Richardson P."/>
        </authorList>
    </citation>
    <scope>NUCLEOTIDE SEQUENCE [LARGE SCALE GENOMIC DNA]</scope>
    <source>
        <strain>WCH70</strain>
    </source>
</reference>
<evidence type="ECO:0000255" key="1">
    <source>
        <dbReference type="HAMAP-Rule" id="MF_00487"/>
    </source>
</evidence>
<protein>
    <recommendedName>
        <fullName evidence="1">Malate dehydrogenase</fullName>
        <ecNumber evidence="1">1.1.1.37</ecNumber>
    </recommendedName>
</protein>